<name>RL36_XANCP</name>
<reference key="1">
    <citation type="journal article" date="2002" name="Nature">
        <title>Comparison of the genomes of two Xanthomonas pathogens with differing host specificities.</title>
        <authorList>
            <person name="da Silva A.C.R."/>
            <person name="Ferro J.A."/>
            <person name="Reinach F.C."/>
            <person name="Farah C.S."/>
            <person name="Furlan L.R."/>
            <person name="Quaggio R.B."/>
            <person name="Monteiro-Vitorello C.B."/>
            <person name="Van Sluys M.A."/>
            <person name="Almeida N.F. Jr."/>
            <person name="Alves L.M.C."/>
            <person name="do Amaral A.M."/>
            <person name="Bertolini M.C."/>
            <person name="Camargo L.E.A."/>
            <person name="Camarotte G."/>
            <person name="Cannavan F."/>
            <person name="Cardozo J."/>
            <person name="Chambergo F."/>
            <person name="Ciapina L.P."/>
            <person name="Cicarelli R.M.B."/>
            <person name="Coutinho L.L."/>
            <person name="Cursino-Santos J.R."/>
            <person name="El-Dorry H."/>
            <person name="Faria J.B."/>
            <person name="Ferreira A.J.S."/>
            <person name="Ferreira R.C.C."/>
            <person name="Ferro M.I.T."/>
            <person name="Formighieri E.F."/>
            <person name="Franco M.C."/>
            <person name="Greggio C.C."/>
            <person name="Gruber A."/>
            <person name="Katsuyama A.M."/>
            <person name="Kishi L.T."/>
            <person name="Leite R.P."/>
            <person name="Lemos E.G.M."/>
            <person name="Lemos M.V.F."/>
            <person name="Locali E.C."/>
            <person name="Machado M.A."/>
            <person name="Madeira A.M.B.N."/>
            <person name="Martinez-Rossi N.M."/>
            <person name="Martins E.C."/>
            <person name="Meidanis J."/>
            <person name="Menck C.F.M."/>
            <person name="Miyaki C.Y."/>
            <person name="Moon D.H."/>
            <person name="Moreira L.M."/>
            <person name="Novo M.T.M."/>
            <person name="Okura V.K."/>
            <person name="Oliveira M.C."/>
            <person name="Oliveira V.R."/>
            <person name="Pereira H.A."/>
            <person name="Rossi A."/>
            <person name="Sena J.A.D."/>
            <person name="Silva C."/>
            <person name="de Souza R.F."/>
            <person name="Spinola L.A.F."/>
            <person name="Takita M.A."/>
            <person name="Tamura R.E."/>
            <person name="Teixeira E.C."/>
            <person name="Tezza R.I.D."/>
            <person name="Trindade dos Santos M."/>
            <person name="Truffi D."/>
            <person name="Tsai S.M."/>
            <person name="White F.F."/>
            <person name="Setubal J.C."/>
            <person name="Kitajima J.P."/>
        </authorList>
    </citation>
    <scope>NUCLEOTIDE SEQUENCE [LARGE SCALE GENOMIC DNA]</scope>
    <source>
        <strain>ATCC 33913 / DSM 3586 / NCPPB 528 / LMG 568 / P 25</strain>
    </source>
</reference>
<gene>
    <name evidence="1" type="primary">rpmJ</name>
    <name type="ordered locus">XCC2196</name>
</gene>
<evidence type="ECO:0000255" key="1">
    <source>
        <dbReference type="HAMAP-Rule" id="MF_00251"/>
    </source>
</evidence>
<evidence type="ECO:0000305" key="2"/>
<protein>
    <recommendedName>
        <fullName evidence="1">Large ribosomal subunit protein bL36</fullName>
    </recommendedName>
    <alternativeName>
        <fullName evidence="2">50S ribosomal protein L36</fullName>
    </alternativeName>
</protein>
<accession>P66310</accession>
<accession>Q8NL34</accession>
<organism>
    <name type="scientific">Xanthomonas campestris pv. campestris (strain ATCC 33913 / DSM 3586 / NCPPB 528 / LMG 568 / P 25)</name>
    <dbReference type="NCBI Taxonomy" id="190485"/>
    <lineage>
        <taxon>Bacteria</taxon>
        <taxon>Pseudomonadati</taxon>
        <taxon>Pseudomonadota</taxon>
        <taxon>Gammaproteobacteria</taxon>
        <taxon>Lysobacterales</taxon>
        <taxon>Lysobacteraceae</taxon>
        <taxon>Xanthomonas</taxon>
    </lineage>
</organism>
<keyword id="KW-1185">Reference proteome</keyword>
<keyword id="KW-0687">Ribonucleoprotein</keyword>
<keyword id="KW-0689">Ribosomal protein</keyword>
<sequence length="41" mass="4872">MKVLSSLKSAKTRHRDCKVVRRRGKVFVICKSNPRFKARQR</sequence>
<comment type="similarity">
    <text evidence="1">Belongs to the bacterial ribosomal protein bL36 family.</text>
</comment>
<proteinExistence type="inferred from homology"/>
<dbReference type="EMBL" id="AE008922">
    <property type="protein sequence ID" value="AAM41476.1"/>
    <property type="molecule type" value="Genomic_DNA"/>
</dbReference>
<dbReference type="RefSeq" id="NP_637552.1">
    <property type="nucleotide sequence ID" value="NC_003902.1"/>
</dbReference>
<dbReference type="SMR" id="P66310"/>
<dbReference type="STRING" id="190485.XCC2196"/>
<dbReference type="EnsemblBacteria" id="AAM41476">
    <property type="protein sequence ID" value="AAM41476"/>
    <property type="gene ID" value="XCC2196"/>
</dbReference>
<dbReference type="KEGG" id="xcc:XCC2196"/>
<dbReference type="PATRIC" id="fig|190485.4.peg.2345"/>
<dbReference type="eggNOG" id="COG0257">
    <property type="taxonomic scope" value="Bacteria"/>
</dbReference>
<dbReference type="HOGENOM" id="CLU_135723_3_3_6"/>
<dbReference type="OrthoDB" id="9801558at2"/>
<dbReference type="PRO" id="PR:P66310"/>
<dbReference type="Proteomes" id="UP000001010">
    <property type="component" value="Chromosome"/>
</dbReference>
<dbReference type="GO" id="GO:1990904">
    <property type="term" value="C:ribonucleoprotein complex"/>
    <property type="evidence" value="ECO:0007669"/>
    <property type="project" value="UniProtKB-KW"/>
</dbReference>
<dbReference type="GO" id="GO:0005840">
    <property type="term" value="C:ribosome"/>
    <property type="evidence" value="ECO:0007669"/>
    <property type="project" value="UniProtKB-KW"/>
</dbReference>
<dbReference type="GO" id="GO:0003735">
    <property type="term" value="F:structural constituent of ribosome"/>
    <property type="evidence" value="ECO:0007669"/>
    <property type="project" value="InterPro"/>
</dbReference>
<dbReference type="GO" id="GO:0006412">
    <property type="term" value="P:translation"/>
    <property type="evidence" value="ECO:0007669"/>
    <property type="project" value="UniProtKB-UniRule"/>
</dbReference>
<dbReference type="HAMAP" id="MF_00251">
    <property type="entry name" value="Ribosomal_bL36"/>
    <property type="match status" value="1"/>
</dbReference>
<dbReference type="InterPro" id="IPR000473">
    <property type="entry name" value="Ribosomal_bL36"/>
</dbReference>
<dbReference type="InterPro" id="IPR035977">
    <property type="entry name" value="Ribosomal_bL36_sp"/>
</dbReference>
<dbReference type="InterPro" id="IPR047621">
    <property type="entry name" value="Ribosomal_L36_bact"/>
</dbReference>
<dbReference type="NCBIfam" id="NF002021">
    <property type="entry name" value="PRK00831.1"/>
    <property type="match status" value="1"/>
</dbReference>
<dbReference type="NCBIfam" id="TIGR01022">
    <property type="entry name" value="rpmJ_bact"/>
    <property type="match status" value="1"/>
</dbReference>
<dbReference type="PANTHER" id="PTHR47781">
    <property type="entry name" value="50S RIBOSOMAL PROTEIN L36 2"/>
    <property type="match status" value="1"/>
</dbReference>
<dbReference type="PANTHER" id="PTHR47781:SF1">
    <property type="entry name" value="LARGE RIBOSOMAL SUBUNIT PROTEIN BL36B"/>
    <property type="match status" value="1"/>
</dbReference>
<dbReference type="Pfam" id="PF00444">
    <property type="entry name" value="Ribosomal_L36"/>
    <property type="match status" value="1"/>
</dbReference>
<dbReference type="SUPFAM" id="SSF57840">
    <property type="entry name" value="Ribosomal protein L36"/>
    <property type="match status" value="1"/>
</dbReference>
<dbReference type="PROSITE" id="PS00828">
    <property type="entry name" value="RIBOSOMAL_L36"/>
    <property type="match status" value="1"/>
</dbReference>
<feature type="chain" id="PRO_0000126299" description="Large ribosomal subunit protein bL36">
    <location>
        <begin position="1"/>
        <end position="41"/>
    </location>
</feature>